<dbReference type="EC" id="5.4.99.12" evidence="1"/>
<dbReference type="EMBL" id="CP000439">
    <property type="protein sequence ID" value="ABK89787.1"/>
    <property type="molecule type" value="Genomic_DNA"/>
</dbReference>
<dbReference type="RefSeq" id="WP_003033783.1">
    <property type="nucleotide sequence ID" value="NC_008601.1"/>
</dbReference>
<dbReference type="SMR" id="A0Q6C2"/>
<dbReference type="KEGG" id="ftn:FTN_0899"/>
<dbReference type="KEGG" id="ftx:AW25_1119"/>
<dbReference type="BioCyc" id="FTUL401614:G1G75-937-MONOMER"/>
<dbReference type="Proteomes" id="UP000000762">
    <property type="component" value="Chromosome"/>
</dbReference>
<dbReference type="GO" id="GO:0003723">
    <property type="term" value="F:RNA binding"/>
    <property type="evidence" value="ECO:0007669"/>
    <property type="project" value="InterPro"/>
</dbReference>
<dbReference type="GO" id="GO:0160147">
    <property type="term" value="F:tRNA pseudouridine(38-40) synthase activity"/>
    <property type="evidence" value="ECO:0007669"/>
    <property type="project" value="UniProtKB-EC"/>
</dbReference>
<dbReference type="GO" id="GO:0031119">
    <property type="term" value="P:tRNA pseudouridine synthesis"/>
    <property type="evidence" value="ECO:0007669"/>
    <property type="project" value="UniProtKB-UniRule"/>
</dbReference>
<dbReference type="CDD" id="cd02570">
    <property type="entry name" value="PseudoU_synth_EcTruA"/>
    <property type="match status" value="1"/>
</dbReference>
<dbReference type="FunFam" id="3.30.70.580:FF:000001">
    <property type="entry name" value="tRNA pseudouridine synthase A"/>
    <property type="match status" value="1"/>
</dbReference>
<dbReference type="Gene3D" id="3.30.70.660">
    <property type="entry name" value="Pseudouridine synthase I, catalytic domain, C-terminal subdomain"/>
    <property type="match status" value="1"/>
</dbReference>
<dbReference type="Gene3D" id="3.30.70.580">
    <property type="entry name" value="Pseudouridine synthase I, catalytic domain, N-terminal subdomain"/>
    <property type="match status" value="1"/>
</dbReference>
<dbReference type="HAMAP" id="MF_00171">
    <property type="entry name" value="TruA"/>
    <property type="match status" value="1"/>
</dbReference>
<dbReference type="InterPro" id="IPR020103">
    <property type="entry name" value="PsdUridine_synth_cat_dom_sf"/>
</dbReference>
<dbReference type="InterPro" id="IPR001406">
    <property type="entry name" value="PsdUridine_synth_TruA"/>
</dbReference>
<dbReference type="InterPro" id="IPR020097">
    <property type="entry name" value="PsdUridine_synth_TruA_a/b_dom"/>
</dbReference>
<dbReference type="InterPro" id="IPR020095">
    <property type="entry name" value="PsdUridine_synth_TruA_C"/>
</dbReference>
<dbReference type="InterPro" id="IPR020094">
    <property type="entry name" value="TruA/RsuA/RluB/E/F_N"/>
</dbReference>
<dbReference type="NCBIfam" id="TIGR00071">
    <property type="entry name" value="hisT_truA"/>
    <property type="match status" value="1"/>
</dbReference>
<dbReference type="PANTHER" id="PTHR11142">
    <property type="entry name" value="PSEUDOURIDYLATE SYNTHASE"/>
    <property type="match status" value="1"/>
</dbReference>
<dbReference type="PANTHER" id="PTHR11142:SF0">
    <property type="entry name" value="TRNA PSEUDOURIDINE SYNTHASE-LIKE 1"/>
    <property type="match status" value="1"/>
</dbReference>
<dbReference type="Pfam" id="PF01416">
    <property type="entry name" value="PseudoU_synth_1"/>
    <property type="match status" value="2"/>
</dbReference>
<dbReference type="PIRSF" id="PIRSF001430">
    <property type="entry name" value="tRNA_psdUrid_synth"/>
    <property type="match status" value="1"/>
</dbReference>
<dbReference type="SUPFAM" id="SSF55120">
    <property type="entry name" value="Pseudouridine synthase"/>
    <property type="match status" value="1"/>
</dbReference>
<keyword id="KW-0413">Isomerase</keyword>
<keyword id="KW-0819">tRNA processing</keyword>
<protein>
    <recommendedName>
        <fullName evidence="1">tRNA pseudouridine synthase A</fullName>
        <ecNumber evidence="1">5.4.99.12</ecNumber>
    </recommendedName>
    <alternativeName>
        <fullName evidence="1">tRNA pseudouridine(38-40) synthase</fullName>
    </alternativeName>
    <alternativeName>
        <fullName evidence="1">tRNA pseudouridylate synthase I</fullName>
    </alternativeName>
    <alternativeName>
        <fullName evidence="1">tRNA-uridine isomerase I</fullName>
    </alternativeName>
</protein>
<name>TRUA_FRATN</name>
<evidence type="ECO:0000255" key="1">
    <source>
        <dbReference type="HAMAP-Rule" id="MF_00171"/>
    </source>
</evidence>
<organism>
    <name type="scientific">Francisella tularensis subsp. novicida (strain U112)</name>
    <dbReference type="NCBI Taxonomy" id="401614"/>
    <lineage>
        <taxon>Bacteria</taxon>
        <taxon>Pseudomonadati</taxon>
        <taxon>Pseudomonadota</taxon>
        <taxon>Gammaproteobacteria</taxon>
        <taxon>Thiotrichales</taxon>
        <taxon>Francisellaceae</taxon>
        <taxon>Francisella</taxon>
    </lineage>
</organism>
<comment type="function">
    <text evidence="1">Formation of pseudouridine at positions 38, 39 and 40 in the anticodon stem and loop of transfer RNAs.</text>
</comment>
<comment type="catalytic activity">
    <reaction evidence="1">
        <text>uridine(38/39/40) in tRNA = pseudouridine(38/39/40) in tRNA</text>
        <dbReference type="Rhea" id="RHEA:22376"/>
        <dbReference type="Rhea" id="RHEA-COMP:10085"/>
        <dbReference type="Rhea" id="RHEA-COMP:10087"/>
        <dbReference type="ChEBI" id="CHEBI:65314"/>
        <dbReference type="ChEBI" id="CHEBI:65315"/>
        <dbReference type="EC" id="5.4.99.12"/>
    </reaction>
</comment>
<comment type="subunit">
    <text evidence="1">Homodimer.</text>
</comment>
<comment type="similarity">
    <text evidence="1">Belongs to the tRNA pseudouridine synthase TruA family.</text>
</comment>
<gene>
    <name evidence="1" type="primary">truA</name>
    <name type="ordered locus">FTN_0899</name>
</gene>
<reference key="1">
    <citation type="journal article" date="2007" name="Genome Biol.">
        <title>Comparison of Francisella tularensis genomes reveals evolutionary events associated with the emergence of human pathogenic strains.</title>
        <authorList>
            <person name="Rohmer L."/>
            <person name="Fong C."/>
            <person name="Abmayr S."/>
            <person name="Wasnick M."/>
            <person name="Larson Freeman T.J."/>
            <person name="Radey M."/>
            <person name="Guina T."/>
            <person name="Svensson K."/>
            <person name="Hayden H.S."/>
            <person name="Jacobs M."/>
            <person name="Gallagher L.A."/>
            <person name="Manoil C."/>
            <person name="Ernst R.K."/>
            <person name="Drees B."/>
            <person name="Buckley D."/>
            <person name="Haugen E."/>
            <person name="Bovee D."/>
            <person name="Zhou Y."/>
            <person name="Chang J."/>
            <person name="Levy R."/>
            <person name="Lim R."/>
            <person name="Gillett W."/>
            <person name="Guenthener D."/>
            <person name="Kang A."/>
            <person name="Shaffer S.A."/>
            <person name="Taylor G."/>
            <person name="Chen J."/>
            <person name="Gallis B."/>
            <person name="D'Argenio D.A."/>
            <person name="Forsman M."/>
            <person name="Olson M.V."/>
            <person name="Goodlett D.R."/>
            <person name="Kaul R."/>
            <person name="Miller S.I."/>
            <person name="Brittnacher M.J."/>
        </authorList>
    </citation>
    <scope>NUCLEOTIDE SEQUENCE [LARGE SCALE GENOMIC DNA]</scope>
    <source>
        <strain>U112</strain>
    </source>
</reference>
<proteinExistence type="inferred from homology"/>
<accession>A0Q6C2</accession>
<sequence length="258" mass="29573">MKNYLLQIEYFGRNYCGWQRQSHSPSVQEELEKALSKIANQNIEVTCAGRTDTGVHATSQIVNFYSDAERPLSAWQRGVNALLPQDIKILAVQQVDNNFNSRFTAINRTYNYIIYNSATSSPIFAEHCLWENRELDIDKMNQACEYLLGEQDFSSFRSSQCQSNTPFRNIQKAEFIKQGSFIVFEVVGNAFLHHMIRNLVGSLLKVGLGFESPEWIKVVLEAKDRTQAAETAKAHGLYFVGVEYPEFSFKRQIIKLFC</sequence>
<feature type="chain" id="PRO_1000017085" description="tRNA pseudouridine synthase A">
    <location>
        <begin position="1"/>
        <end position="258"/>
    </location>
</feature>
<feature type="active site" description="Nucleophile" evidence="1">
    <location>
        <position position="52"/>
    </location>
</feature>
<feature type="binding site" evidence="1">
    <location>
        <position position="110"/>
    </location>
    <ligand>
        <name>substrate</name>
    </ligand>
</feature>